<comment type="catalytic activity">
    <reaction>
        <text>O-acetyl-L-serine + hydrogen sulfide = L-cysteine + acetate</text>
        <dbReference type="Rhea" id="RHEA:14829"/>
        <dbReference type="ChEBI" id="CHEBI:29919"/>
        <dbReference type="ChEBI" id="CHEBI:30089"/>
        <dbReference type="ChEBI" id="CHEBI:35235"/>
        <dbReference type="ChEBI" id="CHEBI:58340"/>
        <dbReference type="EC" id="2.5.1.47"/>
    </reaction>
</comment>
<comment type="cofactor">
    <cofactor evidence="1">
        <name>pyridoxal 5'-phosphate</name>
        <dbReference type="ChEBI" id="CHEBI:597326"/>
    </cofactor>
</comment>
<comment type="pathway">
    <text>Amino-acid biosynthesis; L-cysteine biosynthesis; L-cysteine from L-serine: step 2/2.</text>
</comment>
<comment type="subunit">
    <text evidence="1">Homodimer.</text>
</comment>
<comment type="similarity">
    <text evidence="2">Belongs to the cysteine synthase/cystathionine beta-synthase family.</text>
</comment>
<evidence type="ECO:0000250" key="1"/>
<evidence type="ECO:0000305" key="2"/>
<protein>
    <recommendedName>
        <fullName>Cysteine synthase</fullName>
        <shortName>CSase</shortName>
        <ecNumber>2.5.1.47</ecNumber>
    </recommendedName>
    <alternativeName>
        <fullName>O-acetylserine (thiol)-lyase</fullName>
        <shortName>OAS-TL</shortName>
    </alternativeName>
    <alternativeName>
        <fullName>O-acetylserine sulfhydrylase</fullName>
    </alternativeName>
</protein>
<accession>Q8CMT6</accession>
<feature type="chain" id="PRO_0000167101" description="Cysteine synthase">
    <location>
        <begin position="1"/>
        <end position="310"/>
    </location>
</feature>
<feature type="binding site" evidence="1">
    <location>
        <position position="76"/>
    </location>
    <ligand>
        <name>pyridoxal 5'-phosphate</name>
        <dbReference type="ChEBI" id="CHEBI:597326"/>
    </ligand>
</feature>
<feature type="binding site" evidence="1">
    <location>
        <begin position="180"/>
        <end position="184"/>
    </location>
    <ligand>
        <name>pyridoxal 5'-phosphate</name>
        <dbReference type="ChEBI" id="CHEBI:597326"/>
    </ligand>
</feature>
<feature type="binding site" evidence="1">
    <location>
        <position position="268"/>
    </location>
    <ligand>
        <name>pyridoxal 5'-phosphate</name>
        <dbReference type="ChEBI" id="CHEBI:597326"/>
    </ligand>
</feature>
<feature type="modified residue" description="N6-(pyridoxal phosphate)lysine" evidence="1">
    <location>
        <position position="46"/>
    </location>
</feature>
<gene>
    <name type="primary">cysK</name>
    <name type="ordered locus">SE_2270</name>
</gene>
<name>CYSK_STAES</name>
<keyword id="KW-0028">Amino-acid biosynthesis</keyword>
<keyword id="KW-0198">Cysteine biosynthesis</keyword>
<keyword id="KW-0663">Pyridoxal phosphate</keyword>
<keyword id="KW-0808">Transferase</keyword>
<proteinExistence type="inferred from homology"/>
<organism>
    <name type="scientific">Staphylococcus epidermidis (strain ATCC 12228 / FDA PCI 1200)</name>
    <dbReference type="NCBI Taxonomy" id="176280"/>
    <lineage>
        <taxon>Bacteria</taxon>
        <taxon>Bacillati</taxon>
        <taxon>Bacillota</taxon>
        <taxon>Bacilli</taxon>
        <taxon>Bacillales</taxon>
        <taxon>Staphylococcaceae</taxon>
        <taxon>Staphylococcus</taxon>
    </lineage>
</organism>
<reference key="1">
    <citation type="journal article" date="2003" name="Mol. Microbiol.">
        <title>Genome-based analysis of virulence genes in a non-biofilm-forming Staphylococcus epidermidis strain (ATCC 12228).</title>
        <authorList>
            <person name="Zhang Y.-Q."/>
            <person name="Ren S.-X."/>
            <person name="Li H.-L."/>
            <person name="Wang Y.-X."/>
            <person name="Fu G."/>
            <person name="Yang J."/>
            <person name="Qin Z.-Q."/>
            <person name="Miao Y.-G."/>
            <person name="Wang W.-Y."/>
            <person name="Chen R.-S."/>
            <person name="Shen Y."/>
            <person name="Chen Z."/>
            <person name="Yuan Z.-H."/>
            <person name="Zhao G.-P."/>
            <person name="Qu D."/>
            <person name="Danchin A."/>
            <person name="Wen Y.-M."/>
        </authorList>
    </citation>
    <scope>NUCLEOTIDE SEQUENCE [LARGE SCALE GENOMIC DNA]</scope>
    <source>
        <strain>ATCC 12228 / FDA PCI 1200</strain>
    </source>
</reference>
<sequence>MAQKPVDYVTQIIGNTPVVKLRNVVDDDAADIYVKLEYQNPGGSVKDRIALAMIEKAEREGKIKPGDTIVEPTSGNTGIGLAFVCAAKGYKAVFTMPETMSQERRNLLKAYGAELVLTPGSEAMKGAIKKAKELKEEHGYFEPQQFENPANPEIHELTTGPELVEQFEGRQIDAFLAGVGTGGTLSGVGKVLKKEYPNVEIVAIEPEASPVLSGGEPGPHKLQGLGAGFVPDTLNTEVYDSIIKVGNDTAMDMARRVAREEGILAGISSGAAIYAAIQKAKELGKGKTVVTVLPSNGERYLSTPLYSFDN</sequence>
<dbReference type="EC" id="2.5.1.47"/>
<dbReference type="EMBL" id="AE015929">
    <property type="protein sequence ID" value="AAO05912.1"/>
    <property type="molecule type" value="Genomic_DNA"/>
</dbReference>
<dbReference type="RefSeq" id="NP_765825.1">
    <property type="nucleotide sequence ID" value="NC_004461.1"/>
</dbReference>
<dbReference type="RefSeq" id="WP_001832242.1">
    <property type="nucleotide sequence ID" value="NZ_WBME01000023.1"/>
</dbReference>
<dbReference type="SMR" id="Q8CMT6"/>
<dbReference type="GeneID" id="50019576"/>
<dbReference type="KEGG" id="sep:SE_2270"/>
<dbReference type="PATRIC" id="fig|176280.10.peg.2213"/>
<dbReference type="eggNOG" id="COG0031">
    <property type="taxonomic scope" value="Bacteria"/>
</dbReference>
<dbReference type="HOGENOM" id="CLU_021018_1_0_9"/>
<dbReference type="OrthoDB" id="9808024at2"/>
<dbReference type="UniPathway" id="UPA00136">
    <property type="reaction ID" value="UER00200"/>
</dbReference>
<dbReference type="Proteomes" id="UP000001411">
    <property type="component" value="Chromosome"/>
</dbReference>
<dbReference type="GO" id="GO:0004124">
    <property type="term" value="F:cysteine synthase activity"/>
    <property type="evidence" value="ECO:0007669"/>
    <property type="project" value="UniProtKB-EC"/>
</dbReference>
<dbReference type="GO" id="GO:0006535">
    <property type="term" value="P:cysteine biosynthetic process from serine"/>
    <property type="evidence" value="ECO:0007669"/>
    <property type="project" value="InterPro"/>
</dbReference>
<dbReference type="CDD" id="cd01561">
    <property type="entry name" value="CBS_like"/>
    <property type="match status" value="1"/>
</dbReference>
<dbReference type="FunFam" id="3.40.50.1100:FF:000003">
    <property type="entry name" value="Cystathionine beta-synthase"/>
    <property type="match status" value="1"/>
</dbReference>
<dbReference type="FunFam" id="3.40.50.1100:FF:000118">
    <property type="entry name" value="Related to CYS4-cystathionine beta-synthase"/>
    <property type="match status" value="1"/>
</dbReference>
<dbReference type="Gene3D" id="3.40.50.1100">
    <property type="match status" value="2"/>
</dbReference>
<dbReference type="InterPro" id="IPR005856">
    <property type="entry name" value="Cys_synth"/>
</dbReference>
<dbReference type="InterPro" id="IPR050214">
    <property type="entry name" value="Cys_Synth/Cystath_Beta-Synth"/>
</dbReference>
<dbReference type="InterPro" id="IPR005859">
    <property type="entry name" value="CysK"/>
</dbReference>
<dbReference type="InterPro" id="IPR001216">
    <property type="entry name" value="P-phosphate_BS"/>
</dbReference>
<dbReference type="InterPro" id="IPR001926">
    <property type="entry name" value="TrpB-like_PALP"/>
</dbReference>
<dbReference type="InterPro" id="IPR036052">
    <property type="entry name" value="TrpB-like_PALP_sf"/>
</dbReference>
<dbReference type="NCBIfam" id="TIGR01139">
    <property type="entry name" value="cysK"/>
    <property type="match status" value="1"/>
</dbReference>
<dbReference type="NCBIfam" id="TIGR01136">
    <property type="entry name" value="cysKM"/>
    <property type="match status" value="1"/>
</dbReference>
<dbReference type="PANTHER" id="PTHR10314">
    <property type="entry name" value="CYSTATHIONINE BETA-SYNTHASE"/>
    <property type="match status" value="1"/>
</dbReference>
<dbReference type="Pfam" id="PF00291">
    <property type="entry name" value="PALP"/>
    <property type="match status" value="1"/>
</dbReference>
<dbReference type="SUPFAM" id="SSF53686">
    <property type="entry name" value="Tryptophan synthase beta subunit-like PLP-dependent enzymes"/>
    <property type="match status" value="1"/>
</dbReference>
<dbReference type="PROSITE" id="PS00901">
    <property type="entry name" value="CYS_SYNTHASE"/>
    <property type="match status" value="1"/>
</dbReference>